<reference key="1">
    <citation type="journal article" date="2005" name="Proc. Natl. Acad. Sci. U.S.A.">
        <title>The complete genome sequence of Mycobacterium avium subspecies paratuberculosis.</title>
        <authorList>
            <person name="Li L."/>
            <person name="Bannantine J.P."/>
            <person name="Zhang Q."/>
            <person name="Amonsin A."/>
            <person name="May B.J."/>
            <person name="Alt D."/>
            <person name="Banerji N."/>
            <person name="Kanjilal S."/>
            <person name="Kapur V."/>
        </authorList>
    </citation>
    <scope>NUCLEOTIDE SEQUENCE [LARGE SCALE GENOMIC DNA]</scope>
    <source>
        <strain>ATCC BAA-968 / K-10</strain>
    </source>
</reference>
<keyword id="KW-1003">Cell membrane</keyword>
<keyword id="KW-0472">Membrane</keyword>
<keyword id="KW-1185">Reference proteome</keyword>
<keyword id="KW-0812">Transmembrane</keyword>
<keyword id="KW-1133">Transmembrane helix</keyword>
<dbReference type="EMBL" id="AE016958">
    <property type="protein sequence ID" value="AAS05841.1"/>
    <property type="molecule type" value="Genomic_DNA"/>
</dbReference>
<dbReference type="RefSeq" id="WP_010949913.1">
    <property type="nucleotide sequence ID" value="NZ_CP106873.1"/>
</dbReference>
<dbReference type="SMR" id="Q73US5"/>
<dbReference type="STRING" id="262316.MAP_3291c"/>
<dbReference type="KEGG" id="mpa:MAP_3291c"/>
<dbReference type="PATRIC" id="fig|262316.17.peg.3497"/>
<dbReference type="eggNOG" id="COG1615">
    <property type="taxonomic scope" value="Bacteria"/>
</dbReference>
<dbReference type="HOGENOM" id="CLU_007733_1_0_11"/>
<dbReference type="Proteomes" id="UP000000580">
    <property type="component" value="Chromosome"/>
</dbReference>
<dbReference type="GO" id="GO:0005576">
    <property type="term" value="C:extracellular region"/>
    <property type="evidence" value="ECO:0007669"/>
    <property type="project" value="TreeGrafter"/>
</dbReference>
<dbReference type="GO" id="GO:0005886">
    <property type="term" value="C:plasma membrane"/>
    <property type="evidence" value="ECO:0007669"/>
    <property type="project" value="UniProtKB-SubCell"/>
</dbReference>
<dbReference type="HAMAP" id="MF_01600">
    <property type="entry name" value="UPF0182"/>
    <property type="match status" value="1"/>
</dbReference>
<dbReference type="InterPro" id="IPR005372">
    <property type="entry name" value="UPF0182"/>
</dbReference>
<dbReference type="NCBIfam" id="NF000825">
    <property type="entry name" value="PRK00068.1"/>
    <property type="match status" value="1"/>
</dbReference>
<dbReference type="NCBIfam" id="NF009097">
    <property type="entry name" value="PRK12438.1"/>
    <property type="match status" value="1"/>
</dbReference>
<dbReference type="PANTHER" id="PTHR39344">
    <property type="entry name" value="UPF0182 PROTEIN SLL1060"/>
    <property type="match status" value="1"/>
</dbReference>
<dbReference type="PANTHER" id="PTHR39344:SF1">
    <property type="entry name" value="UPF0182 PROTEIN SLL1060"/>
    <property type="match status" value="1"/>
</dbReference>
<dbReference type="Pfam" id="PF03699">
    <property type="entry name" value="UPF0182"/>
    <property type="match status" value="1"/>
</dbReference>
<name>Y3291_MYCPA</name>
<organism>
    <name type="scientific">Mycolicibacterium paratuberculosis (strain ATCC BAA-968 / K-10)</name>
    <name type="common">Mycobacterium paratuberculosis</name>
    <dbReference type="NCBI Taxonomy" id="262316"/>
    <lineage>
        <taxon>Bacteria</taxon>
        <taxon>Bacillati</taxon>
        <taxon>Actinomycetota</taxon>
        <taxon>Actinomycetes</taxon>
        <taxon>Mycobacteriales</taxon>
        <taxon>Mycobacteriaceae</taxon>
        <taxon>Mycobacterium</taxon>
        <taxon>Mycobacterium avium complex (MAC)</taxon>
    </lineage>
</organism>
<feature type="chain" id="PRO_0000157722" description="UPF0182 protein MAP_3291c">
    <location>
        <begin position="1"/>
        <end position="993"/>
    </location>
</feature>
<feature type="transmembrane region" description="Helical" evidence="1">
    <location>
        <begin position="18"/>
        <end position="38"/>
    </location>
</feature>
<feature type="transmembrane region" description="Helical" evidence="1">
    <location>
        <begin position="63"/>
        <end position="83"/>
    </location>
</feature>
<feature type="transmembrane region" description="Helical" evidence="1">
    <location>
        <begin position="113"/>
        <end position="133"/>
    </location>
</feature>
<feature type="transmembrane region" description="Helical" evidence="1">
    <location>
        <begin position="175"/>
        <end position="195"/>
    </location>
</feature>
<feature type="transmembrane region" description="Helical" evidence="1">
    <location>
        <begin position="210"/>
        <end position="230"/>
    </location>
</feature>
<feature type="transmembrane region" description="Helical" evidence="1">
    <location>
        <begin position="254"/>
        <end position="274"/>
    </location>
</feature>
<feature type="transmembrane region" description="Helical" evidence="1">
    <location>
        <begin position="287"/>
        <end position="307"/>
    </location>
</feature>
<feature type="region of interest" description="Disordered" evidence="2">
    <location>
        <begin position="903"/>
        <end position="941"/>
    </location>
</feature>
<feature type="compositionally biased region" description="Pro residues" evidence="2">
    <location>
        <begin position="929"/>
        <end position="939"/>
    </location>
</feature>
<protein>
    <recommendedName>
        <fullName evidence="1">UPF0182 protein MAP_3291c</fullName>
    </recommendedName>
</protein>
<evidence type="ECO:0000255" key="1">
    <source>
        <dbReference type="HAMAP-Rule" id="MF_01600"/>
    </source>
</evidence>
<evidence type="ECO:0000256" key="2">
    <source>
        <dbReference type="SAM" id="MobiDB-lite"/>
    </source>
</evidence>
<proteinExistence type="inferred from homology"/>
<gene>
    <name type="ordered locus">MAP_3291c</name>
</gene>
<accession>Q73US5</accession>
<sequence>MGMRPTARMPKLTRRSRILILIALGVIALLLAGPRLIDAYVDWLWFGELGYRSVFSTVLVTRFVVFLIAGLLVGGIVFAGLAVAYRTRPVFVPSNDNDPVARYRALVLSRLRLVSVGVPVAIGLLAGIIAQSYWVRIQLFLHGGDFGIKDPQFGKDLGFYAFELPFYRLLLSYLFVAVFLAFVANLLAHYIFGGIRLSGRTGALSRSARIQLVTLVGLLVLLKAVAYWLDRYELLSHTRGGKPITGAGYTDINAVLPAKLILMAIALICAAAVFSAITMRDLRIPAIGLVLLLLSSLIVGAGWPLIVEQISVKPNAAQKESEYISRSITATRQAYGLTSDVVTYRNYTGDAQATAQQVADDRATTSNIRLLDPTIVSPAFTQFQQGKNFYYFPDQLSIDRYLDRNGALRDYVVAVRELNPDRLIDNQRDWINRHTVYTHGNGFIASPANTVRGIANDPNQNGGYPEFLVNVVGANGNVVSDGPAPLDQPRVYFGPVISNTSADYAIVGRNGADREYDYETSTETKNYTYTGLGGVPIGDWLSRSVFAAKFAERNFLFSNVIGSNSKILFNRDPARRVEAVAPWLTTDSSVYPAIVNKRLVWIIDGYTTLDNYPYSELTSLESATADSNEVAFNKLAPDKRVSYIRNSVKATVDAYDGTVTLYQQDEQDPVLKAWMQVFPGTVKPKSDISPELAEHLRYPEDLFKVQRMLLAKYHVNDPVTFFSTSDFWDVPLDPNPTASSYQPPYYIVAKNIAKNDNSSSYQLTSAMNRFKRDYLAAYISASSDPATYGRITVLTIPGQVNGPKLANNAITTDPAVSQDLGVIGRDNQNRIRWGNLLTLPVGQGGLLYVEPVYASPGASDAASSYPRLIRVAMMYNDKIGYGPTVRDALTGLFGPGAGAAATNIQPTEGGAPAASPPANAPAPAVTPGSAPPVAAPPVPDGSVTLSPAKAAVLQEIQAAIGAAKDAQKKGDFAGYGAALQRLDDAITKYNNTK</sequence>
<comment type="subcellular location">
    <subcellularLocation>
        <location evidence="1">Cell membrane</location>
        <topology evidence="1">Multi-pass membrane protein</topology>
    </subcellularLocation>
</comment>
<comment type="similarity">
    <text evidence="1">Belongs to the UPF0182 family.</text>
</comment>